<feature type="chain" id="PRO_1000116018" description="Probable GTP-binding protein EngB">
    <location>
        <begin position="1"/>
        <end position="216"/>
    </location>
</feature>
<feature type="domain" description="EngB-type G" evidence="1">
    <location>
        <begin position="27"/>
        <end position="201"/>
    </location>
</feature>
<feature type="binding site" evidence="1">
    <location>
        <begin position="35"/>
        <end position="42"/>
    </location>
    <ligand>
        <name>GTP</name>
        <dbReference type="ChEBI" id="CHEBI:37565"/>
    </ligand>
</feature>
<feature type="binding site" evidence="1">
    <location>
        <position position="42"/>
    </location>
    <ligand>
        <name>Mg(2+)</name>
        <dbReference type="ChEBI" id="CHEBI:18420"/>
    </ligand>
</feature>
<feature type="binding site" evidence="1">
    <location>
        <begin position="62"/>
        <end position="66"/>
    </location>
    <ligand>
        <name>GTP</name>
        <dbReference type="ChEBI" id="CHEBI:37565"/>
    </ligand>
</feature>
<feature type="binding site" evidence="1">
    <location>
        <position position="64"/>
    </location>
    <ligand>
        <name>Mg(2+)</name>
        <dbReference type="ChEBI" id="CHEBI:18420"/>
    </ligand>
</feature>
<feature type="binding site" evidence="1">
    <location>
        <begin position="80"/>
        <end position="83"/>
    </location>
    <ligand>
        <name>GTP</name>
        <dbReference type="ChEBI" id="CHEBI:37565"/>
    </ligand>
</feature>
<feature type="binding site" evidence="1">
    <location>
        <begin position="147"/>
        <end position="150"/>
    </location>
    <ligand>
        <name>GTP</name>
        <dbReference type="ChEBI" id="CHEBI:37565"/>
    </ligand>
</feature>
<feature type="binding site" evidence="1">
    <location>
        <begin position="180"/>
        <end position="182"/>
    </location>
    <ligand>
        <name>GTP</name>
        <dbReference type="ChEBI" id="CHEBI:37565"/>
    </ligand>
</feature>
<comment type="function">
    <text evidence="1">Necessary for normal cell division and for the maintenance of normal septation.</text>
</comment>
<comment type="cofactor">
    <cofactor evidence="1">
        <name>Mg(2+)</name>
        <dbReference type="ChEBI" id="CHEBI:18420"/>
    </cofactor>
</comment>
<comment type="similarity">
    <text evidence="1">Belongs to the TRAFAC class TrmE-Era-EngA-EngB-Septin-like GTPase superfamily. EngB GTPase family.</text>
</comment>
<gene>
    <name evidence="1" type="primary">engB</name>
    <name type="ordered locus">YpAngola_A0024</name>
</gene>
<accession>A9QYI0</accession>
<dbReference type="EMBL" id="CP000901">
    <property type="protein sequence ID" value="ABX87273.1"/>
    <property type="molecule type" value="Genomic_DNA"/>
</dbReference>
<dbReference type="RefSeq" id="WP_012228857.1">
    <property type="nucleotide sequence ID" value="NC_010159.1"/>
</dbReference>
<dbReference type="SMR" id="A9QYI0"/>
<dbReference type="KEGG" id="ypg:YpAngola_A0024"/>
<dbReference type="PATRIC" id="fig|349746.12.peg.968"/>
<dbReference type="GO" id="GO:0005829">
    <property type="term" value="C:cytosol"/>
    <property type="evidence" value="ECO:0007669"/>
    <property type="project" value="TreeGrafter"/>
</dbReference>
<dbReference type="GO" id="GO:0005525">
    <property type="term" value="F:GTP binding"/>
    <property type="evidence" value="ECO:0007669"/>
    <property type="project" value="UniProtKB-UniRule"/>
</dbReference>
<dbReference type="GO" id="GO:0046872">
    <property type="term" value="F:metal ion binding"/>
    <property type="evidence" value="ECO:0007669"/>
    <property type="project" value="UniProtKB-KW"/>
</dbReference>
<dbReference type="GO" id="GO:0000917">
    <property type="term" value="P:division septum assembly"/>
    <property type="evidence" value="ECO:0007669"/>
    <property type="project" value="UniProtKB-KW"/>
</dbReference>
<dbReference type="CDD" id="cd01876">
    <property type="entry name" value="YihA_EngB"/>
    <property type="match status" value="1"/>
</dbReference>
<dbReference type="FunFam" id="3.40.50.300:FF:000098">
    <property type="entry name" value="Probable GTP-binding protein EngB"/>
    <property type="match status" value="1"/>
</dbReference>
<dbReference type="Gene3D" id="3.40.50.300">
    <property type="entry name" value="P-loop containing nucleotide triphosphate hydrolases"/>
    <property type="match status" value="1"/>
</dbReference>
<dbReference type="HAMAP" id="MF_00321">
    <property type="entry name" value="GTPase_EngB"/>
    <property type="match status" value="1"/>
</dbReference>
<dbReference type="InterPro" id="IPR030393">
    <property type="entry name" value="G_ENGB_dom"/>
</dbReference>
<dbReference type="InterPro" id="IPR006073">
    <property type="entry name" value="GTP-bd"/>
</dbReference>
<dbReference type="InterPro" id="IPR019987">
    <property type="entry name" value="GTP-bd_ribosome_bio_YsxC"/>
</dbReference>
<dbReference type="InterPro" id="IPR027417">
    <property type="entry name" value="P-loop_NTPase"/>
</dbReference>
<dbReference type="NCBIfam" id="TIGR03598">
    <property type="entry name" value="GTPase_YsxC"/>
    <property type="match status" value="1"/>
</dbReference>
<dbReference type="PANTHER" id="PTHR11649:SF13">
    <property type="entry name" value="ENGB-TYPE G DOMAIN-CONTAINING PROTEIN"/>
    <property type="match status" value="1"/>
</dbReference>
<dbReference type="PANTHER" id="PTHR11649">
    <property type="entry name" value="MSS1/TRME-RELATED GTP-BINDING PROTEIN"/>
    <property type="match status" value="1"/>
</dbReference>
<dbReference type="Pfam" id="PF01926">
    <property type="entry name" value="MMR_HSR1"/>
    <property type="match status" value="1"/>
</dbReference>
<dbReference type="SUPFAM" id="SSF52540">
    <property type="entry name" value="P-loop containing nucleoside triphosphate hydrolases"/>
    <property type="match status" value="1"/>
</dbReference>
<dbReference type="PROSITE" id="PS51706">
    <property type="entry name" value="G_ENGB"/>
    <property type="match status" value="1"/>
</dbReference>
<keyword id="KW-0131">Cell cycle</keyword>
<keyword id="KW-0132">Cell division</keyword>
<keyword id="KW-0342">GTP-binding</keyword>
<keyword id="KW-0460">Magnesium</keyword>
<keyword id="KW-0479">Metal-binding</keyword>
<keyword id="KW-0547">Nucleotide-binding</keyword>
<keyword id="KW-0717">Septation</keyword>
<proteinExistence type="inferred from homology"/>
<sequence>MTIRNYNYHMTHFVISAPDIRHLPRDEGIEVAFAGRSNAGKSSALNTLTNQKGLARTSKTPGRTQLINLFEVVDGVRLVDLPGYGYAEVPEEMKLKWQRALGEYLQKRNCLKGLVVLMDIRHPLKDLDQQMITWAVAVGTPVLLLLTKADKLASGACKAQLNLVREAIIPFMGDIQVEAFSSLKKIGVDKLREKLDTWFSEIPPEVMAEEFDGEGE</sequence>
<reference key="1">
    <citation type="journal article" date="2010" name="J. Bacteriol.">
        <title>Genome sequence of the deep-rooted Yersinia pestis strain Angola reveals new insights into the evolution and pangenome of the plague bacterium.</title>
        <authorList>
            <person name="Eppinger M."/>
            <person name="Worsham P.L."/>
            <person name="Nikolich M.P."/>
            <person name="Riley D.R."/>
            <person name="Sebastian Y."/>
            <person name="Mou S."/>
            <person name="Achtman M."/>
            <person name="Lindler L.E."/>
            <person name="Ravel J."/>
        </authorList>
    </citation>
    <scope>NUCLEOTIDE SEQUENCE [LARGE SCALE GENOMIC DNA]</scope>
    <source>
        <strain>Angola</strain>
    </source>
</reference>
<protein>
    <recommendedName>
        <fullName evidence="1">Probable GTP-binding protein EngB</fullName>
    </recommendedName>
</protein>
<evidence type="ECO:0000255" key="1">
    <source>
        <dbReference type="HAMAP-Rule" id="MF_00321"/>
    </source>
</evidence>
<name>ENGB_YERPG</name>
<organism>
    <name type="scientific">Yersinia pestis bv. Antiqua (strain Angola)</name>
    <dbReference type="NCBI Taxonomy" id="349746"/>
    <lineage>
        <taxon>Bacteria</taxon>
        <taxon>Pseudomonadati</taxon>
        <taxon>Pseudomonadota</taxon>
        <taxon>Gammaproteobacteria</taxon>
        <taxon>Enterobacterales</taxon>
        <taxon>Yersiniaceae</taxon>
        <taxon>Yersinia</taxon>
    </lineage>
</organism>